<protein>
    <recommendedName>
        <fullName>Cytochrome b</fullName>
    </recommendedName>
    <alternativeName>
        <fullName>Complex III subunit 3</fullName>
    </alternativeName>
    <alternativeName>
        <fullName>Complex III subunit III</fullName>
    </alternativeName>
    <alternativeName>
        <fullName>Cytochrome b-c1 complex subunit 3</fullName>
    </alternativeName>
    <alternativeName>
        <fullName>Ubiquinol-cytochrome-c reductase complex cytochrome b subunit</fullName>
    </alternativeName>
</protein>
<keyword id="KW-0249">Electron transport</keyword>
<keyword id="KW-0349">Heme</keyword>
<keyword id="KW-0408">Iron</keyword>
<keyword id="KW-0472">Membrane</keyword>
<keyword id="KW-0479">Metal-binding</keyword>
<keyword id="KW-0496">Mitochondrion</keyword>
<keyword id="KW-0999">Mitochondrion inner membrane</keyword>
<keyword id="KW-0679">Respiratory chain</keyword>
<keyword id="KW-0812">Transmembrane</keyword>
<keyword id="KW-1133">Transmembrane helix</keyword>
<keyword id="KW-0813">Transport</keyword>
<keyword id="KW-0830">Ubiquinone</keyword>
<name>CYB_CHAHI</name>
<evidence type="ECO:0000250" key="1"/>
<evidence type="ECO:0000250" key="2">
    <source>
        <dbReference type="UniProtKB" id="P00157"/>
    </source>
</evidence>
<evidence type="ECO:0000255" key="3">
    <source>
        <dbReference type="PROSITE-ProRule" id="PRU00967"/>
    </source>
</evidence>
<evidence type="ECO:0000255" key="4">
    <source>
        <dbReference type="PROSITE-ProRule" id="PRU00968"/>
    </source>
</evidence>
<proteinExistence type="inferred from homology"/>
<gene>
    <name type="primary">MT-CYB</name>
    <name type="synonym">COB</name>
    <name type="synonym">CYTB</name>
    <name type="synonym">MTCYB</name>
</gene>
<accession>Q508L2</accession>
<feature type="chain" id="PRO_0000254998" description="Cytochrome b">
    <location>
        <begin position="1"/>
        <end position="379"/>
    </location>
</feature>
<feature type="transmembrane region" description="Helical" evidence="2">
    <location>
        <begin position="33"/>
        <end position="53"/>
    </location>
</feature>
<feature type="transmembrane region" description="Helical" evidence="2">
    <location>
        <begin position="77"/>
        <end position="98"/>
    </location>
</feature>
<feature type="transmembrane region" description="Helical" evidence="2">
    <location>
        <begin position="113"/>
        <end position="133"/>
    </location>
</feature>
<feature type="transmembrane region" description="Helical" evidence="2">
    <location>
        <begin position="178"/>
        <end position="198"/>
    </location>
</feature>
<feature type="transmembrane region" description="Helical" evidence="2">
    <location>
        <begin position="226"/>
        <end position="246"/>
    </location>
</feature>
<feature type="transmembrane region" description="Helical" evidence="2">
    <location>
        <begin position="288"/>
        <end position="308"/>
    </location>
</feature>
<feature type="transmembrane region" description="Helical" evidence="2">
    <location>
        <begin position="320"/>
        <end position="340"/>
    </location>
</feature>
<feature type="transmembrane region" description="Helical" evidence="2">
    <location>
        <begin position="347"/>
        <end position="367"/>
    </location>
</feature>
<feature type="binding site" description="axial binding residue" evidence="2">
    <location>
        <position position="83"/>
    </location>
    <ligand>
        <name>heme b</name>
        <dbReference type="ChEBI" id="CHEBI:60344"/>
        <label>b562</label>
    </ligand>
    <ligandPart>
        <name>Fe</name>
        <dbReference type="ChEBI" id="CHEBI:18248"/>
    </ligandPart>
</feature>
<feature type="binding site" description="axial binding residue" evidence="2">
    <location>
        <position position="97"/>
    </location>
    <ligand>
        <name>heme b</name>
        <dbReference type="ChEBI" id="CHEBI:60344"/>
        <label>b566</label>
    </ligand>
    <ligandPart>
        <name>Fe</name>
        <dbReference type="ChEBI" id="CHEBI:18248"/>
    </ligandPart>
</feature>
<feature type="binding site" description="axial binding residue" evidence="2">
    <location>
        <position position="182"/>
    </location>
    <ligand>
        <name>heme b</name>
        <dbReference type="ChEBI" id="CHEBI:60344"/>
        <label>b562</label>
    </ligand>
    <ligandPart>
        <name>Fe</name>
        <dbReference type="ChEBI" id="CHEBI:18248"/>
    </ligandPart>
</feature>
<feature type="binding site" description="axial binding residue" evidence="2">
    <location>
        <position position="196"/>
    </location>
    <ligand>
        <name>heme b</name>
        <dbReference type="ChEBI" id="CHEBI:60344"/>
        <label>b566</label>
    </ligand>
    <ligandPart>
        <name>Fe</name>
        <dbReference type="ChEBI" id="CHEBI:18248"/>
    </ligandPart>
</feature>
<feature type="binding site" evidence="2">
    <location>
        <position position="201"/>
    </location>
    <ligand>
        <name>a ubiquinone</name>
        <dbReference type="ChEBI" id="CHEBI:16389"/>
    </ligand>
</feature>
<reference key="1">
    <citation type="journal article" date="2005" name="J. Mammal.">
        <title>Phylogenetics of the new world rodent family Heteromyidae.</title>
        <authorList>
            <person name="Alexander L.F."/>
            <person name="Riddle B.R."/>
        </authorList>
    </citation>
    <scope>NUCLEOTIDE SEQUENCE [GENOMIC DNA]</scope>
    <source>
        <strain>Isolate LVT 1099</strain>
    </source>
</reference>
<dbReference type="EMBL" id="AY926391">
    <property type="protein sequence ID" value="AAY23234.1"/>
    <property type="molecule type" value="Genomic_DNA"/>
</dbReference>
<dbReference type="SMR" id="Q508L2"/>
<dbReference type="GO" id="GO:0005743">
    <property type="term" value="C:mitochondrial inner membrane"/>
    <property type="evidence" value="ECO:0007669"/>
    <property type="project" value="UniProtKB-SubCell"/>
</dbReference>
<dbReference type="GO" id="GO:0045275">
    <property type="term" value="C:respiratory chain complex III"/>
    <property type="evidence" value="ECO:0007669"/>
    <property type="project" value="InterPro"/>
</dbReference>
<dbReference type="GO" id="GO:0046872">
    <property type="term" value="F:metal ion binding"/>
    <property type="evidence" value="ECO:0007669"/>
    <property type="project" value="UniProtKB-KW"/>
</dbReference>
<dbReference type="GO" id="GO:0008121">
    <property type="term" value="F:ubiquinol-cytochrome-c reductase activity"/>
    <property type="evidence" value="ECO:0007669"/>
    <property type="project" value="InterPro"/>
</dbReference>
<dbReference type="GO" id="GO:0006122">
    <property type="term" value="P:mitochondrial electron transport, ubiquinol to cytochrome c"/>
    <property type="evidence" value="ECO:0007669"/>
    <property type="project" value="TreeGrafter"/>
</dbReference>
<dbReference type="CDD" id="cd00290">
    <property type="entry name" value="cytochrome_b_C"/>
    <property type="match status" value="1"/>
</dbReference>
<dbReference type="CDD" id="cd00284">
    <property type="entry name" value="Cytochrome_b_N"/>
    <property type="match status" value="1"/>
</dbReference>
<dbReference type="FunFam" id="1.20.810.10:FF:000002">
    <property type="entry name" value="Cytochrome b"/>
    <property type="match status" value="1"/>
</dbReference>
<dbReference type="Gene3D" id="1.20.810.10">
    <property type="entry name" value="Cytochrome Bc1 Complex, Chain C"/>
    <property type="match status" value="1"/>
</dbReference>
<dbReference type="InterPro" id="IPR005798">
    <property type="entry name" value="Cyt_b/b6_C"/>
</dbReference>
<dbReference type="InterPro" id="IPR036150">
    <property type="entry name" value="Cyt_b/b6_C_sf"/>
</dbReference>
<dbReference type="InterPro" id="IPR005797">
    <property type="entry name" value="Cyt_b/b6_N"/>
</dbReference>
<dbReference type="InterPro" id="IPR027387">
    <property type="entry name" value="Cytb/b6-like_sf"/>
</dbReference>
<dbReference type="InterPro" id="IPR030689">
    <property type="entry name" value="Cytochrome_b"/>
</dbReference>
<dbReference type="InterPro" id="IPR048260">
    <property type="entry name" value="Cytochrome_b_C_euk/bac"/>
</dbReference>
<dbReference type="InterPro" id="IPR048259">
    <property type="entry name" value="Cytochrome_b_N_euk/bac"/>
</dbReference>
<dbReference type="InterPro" id="IPR016174">
    <property type="entry name" value="Di-haem_cyt_TM"/>
</dbReference>
<dbReference type="PANTHER" id="PTHR19271">
    <property type="entry name" value="CYTOCHROME B"/>
    <property type="match status" value="1"/>
</dbReference>
<dbReference type="PANTHER" id="PTHR19271:SF16">
    <property type="entry name" value="CYTOCHROME B"/>
    <property type="match status" value="1"/>
</dbReference>
<dbReference type="Pfam" id="PF00032">
    <property type="entry name" value="Cytochrom_B_C"/>
    <property type="match status" value="1"/>
</dbReference>
<dbReference type="Pfam" id="PF00033">
    <property type="entry name" value="Cytochrome_B"/>
    <property type="match status" value="1"/>
</dbReference>
<dbReference type="PIRSF" id="PIRSF038885">
    <property type="entry name" value="COB"/>
    <property type="match status" value="1"/>
</dbReference>
<dbReference type="SUPFAM" id="SSF81648">
    <property type="entry name" value="a domain/subunit of cytochrome bc1 complex (Ubiquinol-cytochrome c reductase)"/>
    <property type="match status" value="1"/>
</dbReference>
<dbReference type="SUPFAM" id="SSF81342">
    <property type="entry name" value="Transmembrane di-heme cytochromes"/>
    <property type="match status" value="1"/>
</dbReference>
<dbReference type="PROSITE" id="PS51003">
    <property type="entry name" value="CYTB_CTER"/>
    <property type="match status" value="1"/>
</dbReference>
<dbReference type="PROSITE" id="PS51002">
    <property type="entry name" value="CYTB_NTER"/>
    <property type="match status" value="1"/>
</dbReference>
<sequence length="379" mass="42735">MTIMRKSHPLMKMVNHAFIDLPAPSNISGWWNFGSLLGLCLIIQIASGLFLAMHYTSDTLTAFSSVAHICRDVNYGWLIRYIHANGASLFFVCLYLHIGRGIYYGSYLYKETWNVGIILLFLTMATAFMGYVLPWGQMSFWGATVITNLLSAIPYIGTDLVEWIWGGFSVDKATLTRFFAFHFILPFIIAAAAMVHLLFLHETGSNNPLGIPSDSDKIPFHPYYTTKDLLGVMILLALFLTFVLFFPDLLGDPDNYSPANPLNTPPHIKPEWYFLFAYAILRSIPNKLGGVIALVLSILVLAMFPILHTANQRSMMFRPISQFLFWMLVSDLAILTWIGGQPVEPPFIMIGQIASILYFSIILILMPLAGLIENKMLKW</sequence>
<organism>
    <name type="scientific">Chaetodipus hispidus</name>
    <name type="common">Hispid pocket mouse</name>
    <name type="synonym">Perognathus hispidus</name>
    <dbReference type="NCBI Taxonomy" id="38665"/>
    <lineage>
        <taxon>Eukaryota</taxon>
        <taxon>Metazoa</taxon>
        <taxon>Chordata</taxon>
        <taxon>Craniata</taxon>
        <taxon>Vertebrata</taxon>
        <taxon>Euteleostomi</taxon>
        <taxon>Mammalia</taxon>
        <taxon>Eutheria</taxon>
        <taxon>Euarchontoglires</taxon>
        <taxon>Glires</taxon>
        <taxon>Rodentia</taxon>
        <taxon>Castorimorpha</taxon>
        <taxon>Heteromyidae</taxon>
        <taxon>Perognathinae</taxon>
        <taxon>Chaetodipus</taxon>
    </lineage>
</organism>
<geneLocation type="mitochondrion"/>
<comment type="function">
    <text evidence="2">Component of the ubiquinol-cytochrome c reductase complex (complex III or cytochrome b-c1 complex) that is part of the mitochondrial respiratory chain. The b-c1 complex mediates electron transfer from ubiquinol to cytochrome c. Contributes to the generation of a proton gradient across the mitochondrial membrane that is then used for ATP synthesis.</text>
</comment>
<comment type="cofactor">
    <cofactor evidence="2">
        <name>heme b</name>
        <dbReference type="ChEBI" id="CHEBI:60344"/>
    </cofactor>
    <text evidence="2">Binds 2 heme b groups non-covalently.</text>
</comment>
<comment type="subunit">
    <text evidence="2">The cytochrome bc1 complex contains 11 subunits: 3 respiratory subunits (MT-CYB, CYC1 and UQCRFS1), 2 core proteins (UQCRC1 and UQCRC2) and 6 low-molecular weight proteins (UQCRH/QCR6, UQCRB/QCR7, UQCRQ/QCR8, UQCR10/QCR9, UQCR11/QCR10 and a cleavage product of UQCRFS1). This cytochrome bc1 complex then forms a dimer.</text>
</comment>
<comment type="subcellular location">
    <subcellularLocation>
        <location evidence="2">Mitochondrion inner membrane</location>
        <topology evidence="2">Multi-pass membrane protein</topology>
    </subcellularLocation>
</comment>
<comment type="miscellaneous">
    <text evidence="1">Heme 1 (or BL or b562) is low-potential and absorbs at about 562 nm, and heme 2 (or BH or b566) is high-potential and absorbs at about 566 nm.</text>
</comment>
<comment type="similarity">
    <text evidence="3 4">Belongs to the cytochrome b family.</text>
</comment>
<comment type="caution">
    <text evidence="2">The full-length protein contains only eight transmembrane helices, not nine as predicted by bioinformatics tools.</text>
</comment>